<proteinExistence type="inferred from homology"/>
<organism>
    <name type="scientific">Vaccinia virus (strain Copenhagen)</name>
    <name type="common">VACV</name>
    <dbReference type="NCBI Taxonomy" id="10249"/>
    <lineage>
        <taxon>Viruses</taxon>
        <taxon>Varidnaviria</taxon>
        <taxon>Bamfordvirae</taxon>
        <taxon>Nucleocytoviricota</taxon>
        <taxon>Pokkesviricetes</taxon>
        <taxon>Chitovirales</taxon>
        <taxon>Poxviridae</taxon>
        <taxon>Chordopoxvirinae</taxon>
        <taxon>Orthopoxvirus</taxon>
        <taxon>Vaccinia virus</taxon>
    </lineage>
</organism>
<keyword id="KW-1015">Disulfide bond</keyword>
<keyword id="KW-0274">FAD</keyword>
<keyword id="KW-0285">Flavoprotein</keyword>
<keyword id="KW-1035">Host cytoplasm</keyword>
<keyword id="KW-0426">Late protein</keyword>
<keyword id="KW-0472">Membrane</keyword>
<keyword id="KW-0560">Oxidoreductase</keyword>
<keyword id="KW-0676">Redox-active center</keyword>
<keyword id="KW-1185">Reference proteome</keyword>
<keyword id="KW-0812">Transmembrane</keyword>
<keyword id="KW-1133">Transmembrane helix</keyword>
<keyword id="KW-0261">Viral envelope protein</keyword>
<keyword id="KW-0946">Virion</keyword>
<dbReference type="EC" id="1.8.3.2" evidence="1"/>
<dbReference type="EMBL" id="M35027">
    <property type="protein sequence ID" value="AAA48051.1"/>
    <property type="molecule type" value="Genomic_DNA"/>
</dbReference>
<dbReference type="PIR" id="E42509">
    <property type="entry name" value="E42509"/>
</dbReference>
<dbReference type="SMR" id="P21050"/>
<dbReference type="Proteomes" id="UP000008269">
    <property type="component" value="Segment"/>
</dbReference>
<dbReference type="GO" id="GO:0030430">
    <property type="term" value="C:host cell cytoplasm"/>
    <property type="evidence" value="ECO:0007669"/>
    <property type="project" value="UniProtKB-SubCell"/>
</dbReference>
<dbReference type="GO" id="GO:0016020">
    <property type="term" value="C:membrane"/>
    <property type="evidence" value="ECO:0007669"/>
    <property type="project" value="UniProtKB-KW"/>
</dbReference>
<dbReference type="GO" id="GO:0019031">
    <property type="term" value="C:viral envelope"/>
    <property type="evidence" value="ECO:0007669"/>
    <property type="project" value="UniProtKB-KW"/>
</dbReference>
<dbReference type="GO" id="GO:0055036">
    <property type="term" value="C:virion membrane"/>
    <property type="evidence" value="ECO:0007669"/>
    <property type="project" value="UniProtKB-SubCell"/>
</dbReference>
<dbReference type="GO" id="GO:0016972">
    <property type="term" value="F:thiol oxidase activity"/>
    <property type="evidence" value="ECO:0007669"/>
    <property type="project" value="UniProtKB-EC"/>
</dbReference>
<dbReference type="Gene3D" id="1.20.120.310">
    <property type="entry name" value="ERV/ALR sulfhydryl oxidase domain"/>
    <property type="match status" value="1"/>
</dbReference>
<dbReference type="InterPro" id="IPR036774">
    <property type="entry name" value="ERV/ALR_sulphydryl_oxid_sf"/>
</dbReference>
<dbReference type="InterPro" id="IPR017905">
    <property type="entry name" value="ERV/ALR_sulphydryl_oxidase"/>
</dbReference>
<dbReference type="InterPro" id="IPR006890">
    <property type="entry name" value="Sulphydryl_Oase_FAD-link_ERV1"/>
</dbReference>
<dbReference type="Pfam" id="PF04805">
    <property type="entry name" value="Pox_E10"/>
    <property type="match status" value="1"/>
</dbReference>
<dbReference type="PIRSF" id="PIRSF015696">
    <property type="entry name" value="VAC_E10R"/>
    <property type="match status" value="1"/>
</dbReference>
<dbReference type="SUPFAM" id="SSF69000">
    <property type="entry name" value="FAD-dependent thiol oxidase"/>
    <property type="match status" value="1"/>
</dbReference>
<dbReference type="PROSITE" id="PS51324">
    <property type="entry name" value="ERV_ALR"/>
    <property type="match status" value="1"/>
</dbReference>
<accession>P21050</accession>
<gene>
    <name type="primary">OPG072</name>
    <name type="ORF">E10R</name>
</gene>
<protein>
    <recommendedName>
        <fullName>Probable FAD-linked sulfhydryl oxidase OPG072</fullName>
        <ecNumber evidence="1">1.8.3.2</ecNumber>
    </recommendedName>
    <alternativeName>
        <fullName>Probable FAD-linked sulfhydryl oxidase E10</fullName>
        <ecNumber>1.8.3.2</ecNumber>
    </alternativeName>
</protein>
<evidence type="ECO:0000250" key="1">
    <source>
        <dbReference type="UniProtKB" id="P23373"/>
    </source>
</evidence>
<evidence type="ECO:0000255" key="2"/>
<evidence type="ECO:0000255" key="3">
    <source>
        <dbReference type="PROSITE-ProRule" id="PRU00654"/>
    </source>
</evidence>
<evidence type="ECO:0000305" key="4"/>
<organismHost>
    <name type="scientific">Homo sapiens</name>
    <name type="common">Human</name>
    <dbReference type="NCBI Taxonomy" id="9606"/>
</organismHost>
<name>PG072_VACCC</name>
<sequence length="95" mass="10851">MNPKHWGRAVWTIIFIVLSQAGLDGNIEACKRKLYTIVSTLPCPACRRHATIAIEDNNVMSSDDLNYIYYFFIRLFNNLASDPKYAIDVSKVKPL</sequence>
<feature type="chain" id="PRO_0000099464" description="Probable FAD-linked sulfhydryl oxidase OPG072">
    <location>
        <begin position="1"/>
        <end position="95"/>
    </location>
</feature>
<feature type="topological domain" description="Intravirion" evidence="2">
    <location>
        <begin position="1"/>
        <end position="8"/>
    </location>
</feature>
<feature type="transmembrane region" description="Helical" evidence="2">
    <location>
        <begin position="9"/>
        <end position="25"/>
    </location>
</feature>
<feature type="topological domain" description="Virion surface" evidence="2">
    <location>
        <begin position="26"/>
        <end position="95"/>
    </location>
</feature>
<feature type="domain" description="ERV/ALR sulfhydryl oxidase" evidence="3">
    <location>
        <begin position="1"/>
        <end position="95"/>
    </location>
</feature>
<feature type="disulfide bond" description="Redox-active" evidence="3">
    <location>
        <begin position="43"/>
        <end position="46"/>
    </location>
</feature>
<reference key="1">
    <citation type="journal article" date="1990" name="Virology">
        <title>The complete DNA sequence of vaccinia virus.</title>
        <authorList>
            <person name="Goebel S.J."/>
            <person name="Johnson G.P."/>
            <person name="Perkus M.E."/>
            <person name="Davis S.W."/>
            <person name="Winslow J.P."/>
            <person name="Paoletti E."/>
        </authorList>
    </citation>
    <scope>NUCLEOTIDE SEQUENCE [LARGE SCALE GENOMIC DNA]</scope>
</reference>
<reference key="2">
    <citation type="journal article" date="1990" name="Virology">
        <title>Appendix to 'The complete DNA sequence of vaccinia virus'.</title>
        <authorList>
            <person name="Goebel S.J."/>
            <person name="Johnson G.P."/>
            <person name="Perkus M.E."/>
            <person name="Davis S.W."/>
            <person name="Winslow J.P."/>
            <person name="Paoletti E."/>
        </authorList>
    </citation>
    <scope>NUCLEOTIDE SEQUENCE [LARGE SCALE GENOMIC DNA]</scope>
</reference>
<comment type="function">
    <text evidence="1">FAD-dependent sulfhydryl oxidase that catalyzes disulfide bond formation. The complete pathway for formation of disulfide bonds in intracellular virion membrane proteins sequentially involves thiol-disulfide transfer between OPG072, OPG128 and OPG088.</text>
</comment>
<comment type="catalytic activity">
    <reaction evidence="1">
        <text>2 R'C(R)SH + O2 = R'C(R)S-S(R)CR' + H2O2</text>
        <dbReference type="Rhea" id="RHEA:17357"/>
        <dbReference type="ChEBI" id="CHEBI:15379"/>
        <dbReference type="ChEBI" id="CHEBI:16240"/>
        <dbReference type="ChEBI" id="CHEBI:16520"/>
        <dbReference type="ChEBI" id="CHEBI:17412"/>
        <dbReference type="EC" id="1.8.3.2"/>
    </reaction>
</comment>
<comment type="cofactor">
    <cofactor evidence="3">
        <name>FAD</name>
        <dbReference type="ChEBI" id="CHEBI:57692"/>
    </cofactor>
</comment>
<comment type="subunit">
    <text evidence="1">Interacts with OPG128; this interaction involves formation of a transient disulfide-bonded intermediate, allowing disulfide bond transfer.</text>
</comment>
<comment type="subcellular location">
    <subcellularLocation>
        <location evidence="1">Virion membrane</location>
    </subcellularLocation>
    <subcellularLocation>
        <location evidence="1">Host cytoplasm</location>
    </subcellularLocation>
    <text evidence="1">Associated with crescent membranes, immature virions (IV) and mature virions (MV).</text>
</comment>
<comment type="induction">
    <text evidence="1">Expressed in the early phase of the viral replicative cycle.</text>
</comment>
<comment type="similarity">
    <text evidence="4">Belongs to the orthopoxvirus OPG072 family.</text>
</comment>